<accession>Q60560</accession>
<dbReference type="EC" id="3.6.4.12" evidence="2"/>
<dbReference type="EC" id="3.6.4.13" evidence="2"/>
<dbReference type="EMBL" id="L15625">
    <property type="protein sequence ID" value="AAB00104.1"/>
    <property type="molecule type" value="mRNA"/>
</dbReference>
<dbReference type="PIR" id="T48845">
    <property type="entry name" value="T48845"/>
</dbReference>
<dbReference type="RefSeq" id="NP_001268318.1">
    <property type="nucleotide sequence ID" value="NM_001281389.1"/>
</dbReference>
<dbReference type="SMR" id="Q60560"/>
<dbReference type="STRING" id="10036.ENSMAUP00000022483"/>
<dbReference type="Ensembl" id="ENSMAUT00000026482">
    <property type="protein sequence ID" value="ENSMAUP00000022483"/>
    <property type="gene ID" value="ENSMAUG00000019893"/>
</dbReference>
<dbReference type="GeneID" id="101836074"/>
<dbReference type="KEGG" id="maua:101836074"/>
<dbReference type="CTD" id="3508"/>
<dbReference type="eggNOG" id="KOG1803">
    <property type="taxonomic scope" value="Eukaryota"/>
</dbReference>
<dbReference type="OrthoDB" id="6513042at2759"/>
<dbReference type="Proteomes" id="UP000189706">
    <property type="component" value="Unplaced"/>
</dbReference>
<dbReference type="GO" id="GO:0030424">
    <property type="term" value="C:axon"/>
    <property type="evidence" value="ECO:0007669"/>
    <property type="project" value="UniProtKB-SubCell"/>
</dbReference>
<dbReference type="GO" id="GO:0005737">
    <property type="term" value="C:cytoplasm"/>
    <property type="evidence" value="ECO:0000250"/>
    <property type="project" value="UniProtKB"/>
</dbReference>
<dbReference type="GO" id="GO:0005829">
    <property type="term" value="C:cytosol"/>
    <property type="evidence" value="ECO:0007669"/>
    <property type="project" value="Ensembl"/>
</dbReference>
<dbReference type="GO" id="GO:0016604">
    <property type="term" value="C:nuclear body"/>
    <property type="evidence" value="ECO:0007669"/>
    <property type="project" value="Ensembl"/>
</dbReference>
<dbReference type="GO" id="GO:0005634">
    <property type="term" value="C:nucleus"/>
    <property type="evidence" value="ECO:0000250"/>
    <property type="project" value="UniProtKB"/>
</dbReference>
<dbReference type="GO" id="GO:1990904">
    <property type="term" value="C:ribonucleoprotein complex"/>
    <property type="evidence" value="ECO:0007669"/>
    <property type="project" value="UniProtKB-KW"/>
</dbReference>
<dbReference type="GO" id="GO:0043139">
    <property type="term" value="F:5'-3' DNA helicase activity"/>
    <property type="evidence" value="ECO:0000250"/>
    <property type="project" value="UniProtKB"/>
</dbReference>
<dbReference type="GO" id="GO:0032574">
    <property type="term" value="F:5'-3' RNA helicase activity"/>
    <property type="evidence" value="ECO:0000250"/>
    <property type="project" value="UniProtKB"/>
</dbReference>
<dbReference type="GO" id="GO:0005524">
    <property type="term" value="F:ATP binding"/>
    <property type="evidence" value="ECO:0000250"/>
    <property type="project" value="UniProtKB"/>
</dbReference>
<dbReference type="GO" id="GO:0016887">
    <property type="term" value="F:ATP hydrolysis activity"/>
    <property type="evidence" value="ECO:0000250"/>
    <property type="project" value="UniProtKB"/>
</dbReference>
<dbReference type="GO" id="GO:0008094">
    <property type="term" value="F:ATP-dependent activity, acting on DNA"/>
    <property type="evidence" value="ECO:0000250"/>
    <property type="project" value="UniProtKB"/>
</dbReference>
<dbReference type="GO" id="GO:0008186">
    <property type="term" value="F:ATP-dependent activity, acting on RNA"/>
    <property type="evidence" value="ECO:0000250"/>
    <property type="project" value="UniProtKB"/>
</dbReference>
<dbReference type="GO" id="GO:0036121">
    <property type="term" value="F:double-stranded DNA helicase activity"/>
    <property type="evidence" value="ECO:0000250"/>
    <property type="project" value="UniProtKB"/>
</dbReference>
<dbReference type="GO" id="GO:0140296">
    <property type="term" value="F:general transcription initiation factor binding"/>
    <property type="evidence" value="ECO:0007669"/>
    <property type="project" value="Ensembl"/>
</dbReference>
<dbReference type="GO" id="GO:0042802">
    <property type="term" value="F:identical protein binding"/>
    <property type="evidence" value="ECO:0007669"/>
    <property type="project" value="Ensembl"/>
</dbReference>
<dbReference type="GO" id="GO:0043022">
    <property type="term" value="F:ribosome binding"/>
    <property type="evidence" value="ECO:0000250"/>
    <property type="project" value="UniProtKB"/>
</dbReference>
<dbReference type="GO" id="GO:0003723">
    <property type="term" value="F:RNA binding"/>
    <property type="evidence" value="ECO:0000250"/>
    <property type="project" value="UniProtKB"/>
</dbReference>
<dbReference type="GO" id="GO:0003697">
    <property type="term" value="F:single-stranded DNA binding"/>
    <property type="evidence" value="ECO:0000250"/>
    <property type="project" value="UniProtKB"/>
</dbReference>
<dbReference type="GO" id="GO:0003727">
    <property type="term" value="F:single-stranded RNA binding"/>
    <property type="evidence" value="ECO:0000250"/>
    <property type="project" value="UniProtKB"/>
</dbReference>
<dbReference type="GO" id="GO:0000049">
    <property type="term" value="F:tRNA binding"/>
    <property type="evidence" value="ECO:0000250"/>
    <property type="project" value="UniProtKB"/>
</dbReference>
<dbReference type="GO" id="GO:0008270">
    <property type="term" value="F:zinc ion binding"/>
    <property type="evidence" value="ECO:0007669"/>
    <property type="project" value="UniProtKB-KW"/>
</dbReference>
<dbReference type="CDD" id="cd18044">
    <property type="entry name" value="DEXXQc_SMUBP2"/>
    <property type="match status" value="1"/>
</dbReference>
<dbReference type="CDD" id="cd02641">
    <property type="entry name" value="R3H_Smubp-2_like"/>
    <property type="match status" value="1"/>
</dbReference>
<dbReference type="CDD" id="cd18808">
    <property type="entry name" value="SF1_C_Upf1"/>
    <property type="match status" value="1"/>
</dbReference>
<dbReference type="FunFam" id="3.40.50.300:FF:001171">
    <property type="entry name" value="DNA-binding protein SMUBP-2"/>
    <property type="match status" value="1"/>
</dbReference>
<dbReference type="FunFam" id="3.40.50.300:FF:001146">
    <property type="entry name" value="DNA-binding protein SMUBP-2 isoform X1"/>
    <property type="match status" value="1"/>
</dbReference>
<dbReference type="FunFam" id="2.40.30.270:FF:000001">
    <property type="entry name" value="Immunoglobulin mu DNA-binding protein 2"/>
    <property type="match status" value="1"/>
</dbReference>
<dbReference type="FunFam" id="3.30.1370.50:FF:000002">
    <property type="entry name" value="Immunoglobulin mu DNA-binding protein 2"/>
    <property type="match status" value="1"/>
</dbReference>
<dbReference type="FunFam" id="4.10.1110.10:FF:000002">
    <property type="entry name" value="Immunoglobulin mu DNA-binding protein 2"/>
    <property type="match status" value="1"/>
</dbReference>
<dbReference type="Gene3D" id="2.40.30.270">
    <property type="match status" value="1"/>
</dbReference>
<dbReference type="Gene3D" id="4.10.1110.10">
    <property type="entry name" value="AN1-like Zinc finger"/>
    <property type="match status" value="1"/>
</dbReference>
<dbReference type="Gene3D" id="3.40.50.300">
    <property type="entry name" value="P-loop containing nucleotide triphosphate hydrolases"/>
    <property type="match status" value="2"/>
</dbReference>
<dbReference type="Gene3D" id="3.30.1370.50">
    <property type="entry name" value="R3H-like domain"/>
    <property type="match status" value="1"/>
</dbReference>
<dbReference type="InterPro" id="IPR003593">
    <property type="entry name" value="AAA+_ATPase"/>
</dbReference>
<dbReference type="InterPro" id="IPR035896">
    <property type="entry name" value="AN1-like_Znf"/>
</dbReference>
<dbReference type="InterPro" id="IPR050534">
    <property type="entry name" value="Coronavir_polyprotein_1ab"/>
</dbReference>
<dbReference type="InterPro" id="IPR041679">
    <property type="entry name" value="DNA2/NAM7-like_C"/>
</dbReference>
<dbReference type="InterPro" id="IPR041677">
    <property type="entry name" value="DNA2/NAM7_AAA_11"/>
</dbReference>
<dbReference type="InterPro" id="IPR014001">
    <property type="entry name" value="Helicase_ATP-bd"/>
</dbReference>
<dbReference type="InterPro" id="IPR027417">
    <property type="entry name" value="P-loop_NTPase"/>
</dbReference>
<dbReference type="InterPro" id="IPR001374">
    <property type="entry name" value="R3H_dom"/>
</dbReference>
<dbReference type="InterPro" id="IPR036867">
    <property type="entry name" value="R3H_dom_sf"/>
</dbReference>
<dbReference type="InterPro" id="IPR034072">
    <property type="entry name" value="R3H_Smubp-2"/>
</dbReference>
<dbReference type="InterPro" id="IPR047187">
    <property type="entry name" value="SF1_C_Upf1"/>
</dbReference>
<dbReference type="InterPro" id="IPR004483">
    <property type="entry name" value="SMUBP-2/Hcs1-like"/>
</dbReference>
<dbReference type="InterPro" id="IPR048761">
    <property type="entry name" value="SMUBP-2_HCS1_1B"/>
</dbReference>
<dbReference type="InterPro" id="IPR000058">
    <property type="entry name" value="Znf_AN1"/>
</dbReference>
<dbReference type="NCBIfam" id="TIGR00376">
    <property type="entry name" value="IGHMBP2 family helicase"/>
    <property type="match status" value="2"/>
</dbReference>
<dbReference type="PANTHER" id="PTHR43788:SF8">
    <property type="entry name" value="DNA-BINDING PROTEIN SMUBP-2"/>
    <property type="match status" value="1"/>
</dbReference>
<dbReference type="PANTHER" id="PTHR43788">
    <property type="entry name" value="DNA2/NAM7 HELICASE FAMILY MEMBER"/>
    <property type="match status" value="1"/>
</dbReference>
<dbReference type="Pfam" id="PF13086">
    <property type="entry name" value="AAA_11"/>
    <property type="match status" value="1"/>
</dbReference>
<dbReference type="Pfam" id="PF13087">
    <property type="entry name" value="AAA_12"/>
    <property type="match status" value="1"/>
</dbReference>
<dbReference type="Pfam" id="PF01424">
    <property type="entry name" value="R3H"/>
    <property type="match status" value="1"/>
</dbReference>
<dbReference type="Pfam" id="PF21138">
    <property type="entry name" value="SMUBP-2_HCS1_1B"/>
    <property type="match status" value="1"/>
</dbReference>
<dbReference type="Pfam" id="PF01428">
    <property type="entry name" value="zf-AN1"/>
    <property type="match status" value="1"/>
</dbReference>
<dbReference type="SMART" id="SM00382">
    <property type="entry name" value="AAA"/>
    <property type="match status" value="1"/>
</dbReference>
<dbReference type="SMART" id="SM00487">
    <property type="entry name" value="DEXDc"/>
    <property type="match status" value="1"/>
</dbReference>
<dbReference type="SMART" id="SM00393">
    <property type="entry name" value="R3H"/>
    <property type="match status" value="1"/>
</dbReference>
<dbReference type="SMART" id="SM00154">
    <property type="entry name" value="ZnF_AN1"/>
    <property type="match status" value="1"/>
</dbReference>
<dbReference type="SUPFAM" id="SSF118310">
    <property type="entry name" value="AN1-like Zinc finger"/>
    <property type="match status" value="1"/>
</dbReference>
<dbReference type="SUPFAM" id="SSF52540">
    <property type="entry name" value="P-loop containing nucleoside triphosphate hydrolases"/>
    <property type="match status" value="1"/>
</dbReference>
<dbReference type="SUPFAM" id="SSF82708">
    <property type="entry name" value="R3H domain"/>
    <property type="match status" value="1"/>
</dbReference>
<dbReference type="PROSITE" id="PS51061">
    <property type="entry name" value="R3H"/>
    <property type="match status" value="1"/>
</dbReference>
<dbReference type="PROSITE" id="PS51039">
    <property type="entry name" value="ZF_AN1"/>
    <property type="match status" value="1"/>
</dbReference>
<keyword id="KW-0007">Acetylation</keyword>
<keyword id="KW-0010">Activator</keyword>
<keyword id="KW-0067">ATP-binding</keyword>
<keyword id="KW-0966">Cell projection</keyword>
<keyword id="KW-0963">Cytoplasm</keyword>
<keyword id="KW-0238">DNA-binding</keyword>
<keyword id="KW-0347">Helicase</keyword>
<keyword id="KW-0378">Hydrolase</keyword>
<keyword id="KW-0479">Metal-binding</keyword>
<keyword id="KW-0547">Nucleotide-binding</keyword>
<keyword id="KW-0539">Nucleus</keyword>
<keyword id="KW-0597">Phosphoprotein</keyword>
<keyword id="KW-1185">Reference proteome</keyword>
<keyword id="KW-0687">Ribonucleoprotein</keyword>
<keyword id="KW-0694">RNA-binding</keyword>
<keyword id="KW-0804">Transcription</keyword>
<keyword id="KW-0805">Transcription regulation</keyword>
<keyword id="KW-0820">tRNA-binding</keyword>
<keyword id="KW-0862">Zinc</keyword>
<keyword id="KW-0863">Zinc-finger</keyword>
<comment type="function">
    <text evidence="2 5">5' to 3' helicase that unwinds RNA and DNA duplexes in an ATP-dependent reaction (By similarity). Specific to 5'-phosphorylated single-stranded guanine-rich sequences (By similarity). May play a role in RNA metabolism, ribosome biogenesis or initiation of translation (By similarity). May play a role in regulation of transcription (By similarity). Interacts with tRNA-Tyr (By similarity).</text>
</comment>
<comment type="catalytic activity">
    <reaction evidence="2">
        <text>ATP + H2O = ADP + phosphate + H(+)</text>
        <dbReference type="Rhea" id="RHEA:13065"/>
        <dbReference type="ChEBI" id="CHEBI:15377"/>
        <dbReference type="ChEBI" id="CHEBI:15378"/>
        <dbReference type="ChEBI" id="CHEBI:30616"/>
        <dbReference type="ChEBI" id="CHEBI:43474"/>
        <dbReference type="ChEBI" id="CHEBI:456216"/>
        <dbReference type="EC" id="3.6.4.12"/>
    </reaction>
    <physiologicalReaction direction="left-to-right" evidence="2">
        <dbReference type="Rhea" id="RHEA:13066"/>
    </physiologicalReaction>
</comment>
<comment type="catalytic activity">
    <reaction evidence="2">
        <text>ATP + H2O = ADP + phosphate + H(+)</text>
        <dbReference type="Rhea" id="RHEA:13065"/>
        <dbReference type="ChEBI" id="CHEBI:15377"/>
        <dbReference type="ChEBI" id="CHEBI:15378"/>
        <dbReference type="ChEBI" id="CHEBI:30616"/>
        <dbReference type="ChEBI" id="CHEBI:43474"/>
        <dbReference type="ChEBI" id="CHEBI:456216"/>
        <dbReference type="EC" id="3.6.4.13"/>
    </reaction>
    <physiologicalReaction direction="left-to-right" evidence="2">
        <dbReference type="Rhea" id="RHEA:13066"/>
    </physiologicalReaction>
</comment>
<comment type="subunit">
    <text evidence="2">Homooligomer (By similarity). Interacts with RUVBL1 (By similarity). Interacts with RUVBL2 (By similarity). Interacts with GTF3C1 (By similarity). Interacts with ABT1 (By similarity). Interacts with ribosomes (By similarity).</text>
</comment>
<comment type="subcellular location">
    <subcellularLocation>
        <location evidence="11">Nucleus</location>
    </subcellularLocation>
    <subcellularLocation>
        <location evidence="11">Cytoplasm</location>
    </subcellularLocation>
    <subcellularLocation>
        <location evidence="3">Cell projection</location>
        <location evidence="3">Axon</location>
    </subcellularLocation>
</comment>
<comment type="tissue specificity">
    <text evidence="11">High expression in brain and testis, moderate in heart, spleen, and kidney, and low in other tissues.</text>
</comment>
<comment type="domain">
    <text evidence="2">The R3H domain recognizes phosphorylated 5'-ends of single-stranded nucleic acids which promotes binding of nucleic acids and stimulates ATPase activity.</text>
</comment>
<comment type="similarity">
    <text evidence="12">Belongs to the DNA2/NAM7 helicase family.</text>
</comment>
<evidence type="ECO:0000250" key="1"/>
<evidence type="ECO:0000250" key="2">
    <source>
        <dbReference type="UniProtKB" id="P38935"/>
    </source>
</evidence>
<evidence type="ECO:0000250" key="3">
    <source>
        <dbReference type="UniProtKB" id="P40694"/>
    </source>
</evidence>
<evidence type="ECO:0000250" key="4">
    <source>
        <dbReference type="UniProtKB" id="Q92900"/>
    </source>
</evidence>
<evidence type="ECO:0000250" key="5">
    <source>
        <dbReference type="UniProtKB" id="Q9EQN5"/>
    </source>
</evidence>
<evidence type="ECO:0000255" key="6"/>
<evidence type="ECO:0000255" key="7">
    <source>
        <dbReference type="PROSITE-ProRule" id="PRU00382"/>
    </source>
</evidence>
<evidence type="ECO:0000255" key="8">
    <source>
        <dbReference type="PROSITE-ProRule" id="PRU00449"/>
    </source>
</evidence>
<evidence type="ECO:0000255" key="9">
    <source>
        <dbReference type="PROSITE-ProRule" id="PRU00499"/>
    </source>
</evidence>
<evidence type="ECO:0000256" key="10">
    <source>
        <dbReference type="SAM" id="MobiDB-lite"/>
    </source>
</evidence>
<evidence type="ECO:0000269" key="11">
    <source>
    </source>
</evidence>
<evidence type="ECO:0000305" key="12"/>
<reference key="1">
    <citation type="journal article" date="1995" name="J. Biol. Chem.">
        <title>Molecular characterization of the rat insulin enhancer-binding complex 3b2. Cloning of a binding factor with putative helicase motifs.</title>
        <authorList>
            <person name="Shieh S.-Y."/>
            <person name="Stellrecht C.M.M."/>
            <person name="Tsai M.-J."/>
        </authorList>
    </citation>
    <scope>NUCLEOTIDE SEQUENCE [MRNA]</scope>
    <scope>DNA-BINDING</scope>
    <scope>TISSUE SPECIFICITY</scope>
    <scope>SUBCELLULAR LOCATION</scope>
    <source>
        <tissue>Insulinoma</tissue>
    </source>
</reference>
<sequence>MALSTVESFVAQQLELLELERDAEVEERRSWQEHSSLKELQSRGVCLLKLQVSSQCTGLYGQRLVTFEPRKLGPVVVLPSNSFTSGDIVGLYDANESSQLATGVLTRITQKSVTVAFDESHDFQLNLDRENTYRLLKLANDVTYKRLKKALMTLKKYHSGPASSLIDVLLGGSSPSPTTEIPPFTFYNTALDPSQKEAVSFALAQKEVAIIHGPPGTGKTTTVVEIILQAVKQGLKILCCAPSNVAVDNLVERLALCKKRILRLGHPARLLESAQQHSLDAVLARSDNAQIVADIRKDIDQVFGKNKKTQDKREKSNFRNEIKLLRKELKEREEAAIVQSLTAADVVLATNTGASSDGPLKLLPENHFDVVVVDECAQALEASCWIPLLKAPKCILAGDHRQLPPTTISHKAALAGLSRSLMERLVEKHGAGAVRMLTVQYRMHQAITRWASEAMYHGQLTAHPSVAGHLLKDLPGVADTEETSVPLLLIDTAGCGLLELDEEDSQSKGNPGEVRLVTLHIQALVDAGVHAGDIAVIAPYNLQVDLLRQSLSNKHPELEIKSVDGFQGREKEAVILTFVRSNRKGEVGFLAEDRRINVAVTRARRHVAVICDSRTVNNHAFLKTLVDYFTEHGEVRTAFEYLDDIVPENYTHEGSQGHSHAPKPRGPVTSIRKPTNEQENGQEARAAAGQGRRKPNERPPGSQVHSQPSSGARGCDRTGAIDRTEHFRAMIEGFVASKESQLEFPASLSSHDRLLVHQIAEEHGLRHDSTGEGKARHITVSRKSPAGSGGVAPQLPSPPSPAQAEPEPLSQQPLGQPHCSTQLDLKALHLQRLQRQQGSQAQPAKAQPGVGLHPQKTQQKKKKKETKGPALPCEEDFDALVSAVIKADNTCSFAKCTASTTTLGQFCMHCSRRYCLSHHLPEIHGCGEKARAHARQMISREGVLYAGSGTRDRALDPAKRAQLQRRLDKKLGELSSQRTSKRKEKERGT</sequence>
<protein>
    <recommendedName>
        <fullName>DNA-binding protein SMUBP-2</fullName>
        <ecNumber evidence="2">3.6.4.12</ecNumber>
        <ecNumber evidence="2">3.6.4.13</ecNumber>
    </recommendedName>
    <alternativeName>
        <fullName>ATP-dependent helicase IGHMBP2</fullName>
    </alternativeName>
    <alternativeName>
        <fullName>Immunoglobulin mu-binding protein 2</fullName>
    </alternativeName>
    <alternativeName>
        <fullName>Insulin II gene enhancer-binding protein</fullName>
    </alternativeName>
    <alternativeName>
        <fullName>RIPE3B-binding complex 3B2 p110 subunit</fullName>
        <shortName>RIP-1</shortName>
    </alternativeName>
</protein>
<feature type="initiator methionine" description="Removed" evidence="2">
    <location>
        <position position="1"/>
    </location>
</feature>
<feature type="chain" id="PRO_0000080702" description="DNA-binding protein SMUBP-2">
    <location>
        <begin position="2"/>
        <end position="989"/>
    </location>
</feature>
<feature type="domain" description="R3H" evidence="7">
    <location>
        <begin position="721"/>
        <end position="784"/>
    </location>
</feature>
<feature type="zinc finger region" description="AN1-type" evidence="8">
    <location>
        <begin position="885"/>
        <end position="934"/>
    </location>
</feature>
<feature type="region of interest" description="SS DNA-binding" evidence="1">
    <location>
        <begin position="637"/>
        <end position="783"/>
    </location>
</feature>
<feature type="region of interest" description="Disordered" evidence="10">
    <location>
        <begin position="650"/>
        <end position="717"/>
    </location>
</feature>
<feature type="region of interest" description="Disordered" evidence="10">
    <location>
        <begin position="765"/>
        <end position="818"/>
    </location>
</feature>
<feature type="region of interest" description="Disordered" evidence="10">
    <location>
        <begin position="833"/>
        <end position="869"/>
    </location>
</feature>
<feature type="region of interest" description="Disordered" evidence="10">
    <location>
        <begin position="954"/>
        <end position="989"/>
    </location>
</feature>
<feature type="short sequence motif" description="Nuclear localization signal" evidence="6">
    <location>
        <begin position="860"/>
        <end position="864"/>
    </location>
</feature>
<feature type="compositionally biased region" description="Low complexity" evidence="10">
    <location>
        <begin position="677"/>
        <end position="690"/>
    </location>
</feature>
<feature type="compositionally biased region" description="Basic and acidic residues" evidence="10">
    <location>
        <begin position="765"/>
        <end position="775"/>
    </location>
</feature>
<feature type="compositionally biased region" description="Low complexity" evidence="10">
    <location>
        <begin position="833"/>
        <end position="842"/>
    </location>
</feature>
<feature type="compositionally biased region" description="Basic and acidic residues" evidence="10">
    <location>
        <begin position="954"/>
        <end position="972"/>
    </location>
</feature>
<feature type="binding site" evidence="9">
    <location>
        <begin position="213"/>
        <end position="220"/>
    </location>
    <ligand>
        <name>ATP</name>
        <dbReference type="ChEBI" id="CHEBI:30616"/>
    </ligand>
</feature>
<feature type="binding site" evidence="4">
    <location>
        <position position="402"/>
    </location>
    <ligand>
        <name>ATP</name>
        <dbReference type="ChEBI" id="CHEBI:30616"/>
    </ligand>
</feature>
<feature type="binding site" evidence="4">
    <location>
        <position position="441"/>
    </location>
    <ligand>
        <name>ATP</name>
        <dbReference type="ChEBI" id="CHEBI:30616"/>
    </ligand>
</feature>
<feature type="binding site" evidence="4">
    <location>
        <position position="570"/>
    </location>
    <ligand>
        <name>ATP</name>
        <dbReference type="ChEBI" id="CHEBI:30616"/>
    </ligand>
</feature>
<feature type="binding site" evidence="8">
    <location>
        <position position="891"/>
    </location>
    <ligand>
        <name>Zn(2+)</name>
        <dbReference type="ChEBI" id="CHEBI:29105"/>
        <label>1</label>
    </ligand>
</feature>
<feature type="binding site" evidence="8">
    <location>
        <position position="896"/>
    </location>
    <ligand>
        <name>Zn(2+)</name>
        <dbReference type="ChEBI" id="CHEBI:29105"/>
        <label>1</label>
    </ligand>
</feature>
<feature type="binding site" evidence="8">
    <location>
        <position position="907"/>
    </location>
    <ligand>
        <name>Zn(2+)</name>
        <dbReference type="ChEBI" id="CHEBI:29105"/>
        <label>2</label>
    </ligand>
</feature>
<feature type="binding site" evidence="8">
    <location>
        <position position="910"/>
    </location>
    <ligand>
        <name>Zn(2+)</name>
        <dbReference type="ChEBI" id="CHEBI:29105"/>
        <label>2</label>
    </ligand>
</feature>
<feature type="binding site" evidence="8">
    <location>
        <position position="915"/>
    </location>
    <ligand>
        <name>Zn(2+)</name>
        <dbReference type="ChEBI" id="CHEBI:29105"/>
        <label>1</label>
    </ligand>
</feature>
<feature type="binding site" evidence="8">
    <location>
        <position position="918"/>
    </location>
    <ligand>
        <name>Zn(2+)</name>
        <dbReference type="ChEBI" id="CHEBI:29105"/>
        <label>1</label>
    </ligand>
</feature>
<feature type="binding site" evidence="8">
    <location>
        <position position="924"/>
    </location>
    <ligand>
        <name>Zn(2+)</name>
        <dbReference type="ChEBI" id="CHEBI:29105"/>
        <label>2</label>
    </ligand>
</feature>
<feature type="binding site" evidence="8">
    <location>
        <position position="926"/>
    </location>
    <ligand>
        <name>Zn(2+)</name>
        <dbReference type="ChEBI" id="CHEBI:29105"/>
        <label>2</label>
    </ligand>
</feature>
<feature type="modified residue" description="N-acetylalanine" evidence="2">
    <location>
        <position position="2"/>
    </location>
</feature>
<feature type="modified residue" description="Phosphoserine" evidence="3">
    <location>
        <position position="797"/>
    </location>
</feature>
<feature type="modified residue" description="Phosphoserine" evidence="3">
    <location>
        <position position="800"/>
    </location>
</feature>
<organism>
    <name type="scientific">Mesocricetus auratus</name>
    <name type="common">Golden hamster</name>
    <dbReference type="NCBI Taxonomy" id="10036"/>
    <lineage>
        <taxon>Eukaryota</taxon>
        <taxon>Metazoa</taxon>
        <taxon>Chordata</taxon>
        <taxon>Craniata</taxon>
        <taxon>Vertebrata</taxon>
        <taxon>Euteleostomi</taxon>
        <taxon>Mammalia</taxon>
        <taxon>Eutheria</taxon>
        <taxon>Euarchontoglires</taxon>
        <taxon>Glires</taxon>
        <taxon>Rodentia</taxon>
        <taxon>Myomorpha</taxon>
        <taxon>Muroidea</taxon>
        <taxon>Cricetidae</taxon>
        <taxon>Cricetinae</taxon>
        <taxon>Mesocricetus</taxon>
    </lineage>
</organism>
<name>SMBP2_MESAU</name>
<proteinExistence type="evidence at protein level"/>
<gene>
    <name type="primary">IGHMBP2</name>
    <name type="synonym">RIP1</name>
    <name type="synonym">SMUBP2</name>
</gene>